<name>BPT_PHEZH</name>
<sequence length="257" mass="29092">MTQHFPTRQLRFFLTAPSPCPYLPERYERKVFAHLPLSDGATVNDSLTQVGFRRSQNIAYRPACEACSACVSARLPVTDYAFSRSERKVLARNEDLERHLVEAEATMEQFDLLRRYLLARHADGGMAEMTWPDYVAMVEDTAVRTHIIEYRTRPSDGGPGELVACALVDLMSDGLSLVYSFYDPTLGRRSLGSFVILDHVVQAGLAGLPYVYLGYWVRGSEKMDYKVRFSPIELLKAEGWTLMSSRDLRPKDELPGL</sequence>
<dbReference type="EC" id="2.3.2.29" evidence="1"/>
<dbReference type="EMBL" id="CP000747">
    <property type="protein sequence ID" value="ACG78099.1"/>
    <property type="molecule type" value="Genomic_DNA"/>
</dbReference>
<dbReference type="RefSeq" id="WP_012522241.1">
    <property type="nucleotide sequence ID" value="NC_011144.1"/>
</dbReference>
<dbReference type="SMR" id="B4RBQ2"/>
<dbReference type="STRING" id="450851.PHZ_c1688"/>
<dbReference type="KEGG" id="pzu:PHZ_c1688"/>
<dbReference type="eggNOG" id="COG2935">
    <property type="taxonomic scope" value="Bacteria"/>
</dbReference>
<dbReference type="HOGENOM" id="CLU_077607_1_0_5"/>
<dbReference type="OrthoDB" id="9782022at2"/>
<dbReference type="Proteomes" id="UP000001868">
    <property type="component" value="Chromosome"/>
</dbReference>
<dbReference type="GO" id="GO:0005737">
    <property type="term" value="C:cytoplasm"/>
    <property type="evidence" value="ECO:0007669"/>
    <property type="project" value="UniProtKB-SubCell"/>
</dbReference>
<dbReference type="GO" id="GO:0004057">
    <property type="term" value="F:arginyl-tRNA--protein transferase activity"/>
    <property type="evidence" value="ECO:0007669"/>
    <property type="project" value="InterPro"/>
</dbReference>
<dbReference type="GO" id="GO:0008914">
    <property type="term" value="F:leucyl-tRNA--protein transferase activity"/>
    <property type="evidence" value="ECO:0007669"/>
    <property type="project" value="UniProtKB-UniRule"/>
</dbReference>
<dbReference type="GO" id="GO:0071596">
    <property type="term" value="P:ubiquitin-dependent protein catabolic process via the N-end rule pathway"/>
    <property type="evidence" value="ECO:0007669"/>
    <property type="project" value="InterPro"/>
</dbReference>
<dbReference type="HAMAP" id="MF_00689">
    <property type="entry name" value="Bpt"/>
    <property type="match status" value="1"/>
</dbReference>
<dbReference type="InterPro" id="IPR016181">
    <property type="entry name" value="Acyl_CoA_acyltransferase"/>
</dbReference>
<dbReference type="InterPro" id="IPR017138">
    <property type="entry name" value="Asp_Glu_LeuTrfase"/>
</dbReference>
<dbReference type="InterPro" id="IPR030700">
    <property type="entry name" value="N-end_Aminoacyl_Trfase"/>
</dbReference>
<dbReference type="InterPro" id="IPR007472">
    <property type="entry name" value="N-end_Aminoacyl_Trfase_C"/>
</dbReference>
<dbReference type="InterPro" id="IPR007471">
    <property type="entry name" value="N-end_Aminoacyl_Trfase_N"/>
</dbReference>
<dbReference type="NCBIfam" id="NF002342">
    <property type="entry name" value="PRK01305.1-3"/>
    <property type="match status" value="1"/>
</dbReference>
<dbReference type="NCBIfam" id="NF002343">
    <property type="entry name" value="PRK01305.1-4"/>
    <property type="match status" value="1"/>
</dbReference>
<dbReference type="NCBIfam" id="NF002346">
    <property type="entry name" value="PRK01305.2-3"/>
    <property type="match status" value="1"/>
</dbReference>
<dbReference type="PANTHER" id="PTHR21367">
    <property type="entry name" value="ARGININE-TRNA-PROTEIN TRANSFERASE 1"/>
    <property type="match status" value="1"/>
</dbReference>
<dbReference type="PANTHER" id="PTHR21367:SF1">
    <property type="entry name" value="ARGINYL-TRNA--PROTEIN TRANSFERASE 1"/>
    <property type="match status" value="1"/>
</dbReference>
<dbReference type="Pfam" id="PF04377">
    <property type="entry name" value="ATE_C"/>
    <property type="match status" value="1"/>
</dbReference>
<dbReference type="Pfam" id="PF04376">
    <property type="entry name" value="ATE_N"/>
    <property type="match status" value="1"/>
</dbReference>
<dbReference type="PIRSF" id="PIRSF037208">
    <property type="entry name" value="ATE_pro_prd"/>
    <property type="match status" value="1"/>
</dbReference>
<dbReference type="SUPFAM" id="SSF55729">
    <property type="entry name" value="Acyl-CoA N-acyltransferases (Nat)"/>
    <property type="match status" value="1"/>
</dbReference>
<accession>B4RBQ2</accession>
<reference key="1">
    <citation type="journal article" date="2008" name="BMC Genomics">
        <title>Complete genome of Phenylobacterium zucineum - a novel facultative intracellular bacterium isolated from human erythroleukemia cell line K562.</title>
        <authorList>
            <person name="Luo Y."/>
            <person name="Xu X."/>
            <person name="Ding Z."/>
            <person name="Liu Z."/>
            <person name="Zhang B."/>
            <person name="Yan Z."/>
            <person name="Sun J."/>
            <person name="Hu S."/>
            <person name="Hu X."/>
        </authorList>
    </citation>
    <scope>NUCLEOTIDE SEQUENCE [LARGE SCALE GENOMIC DNA]</scope>
    <source>
        <strain>HLK1</strain>
    </source>
</reference>
<feature type="chain" id="PRO_1000131988" description="Aspartate/glutamate leucyltransferase">
    <location>
        <begin position="1"/>
        <end position="257"/>
    </location>
</feature>
<proteinExistence type="inferred from homology"/>
<keyword id="KW-0012">Acyltransferase</keyword>
<keyword id="KW-0963">Cytoplasm</keyword>
<keyword id="KW-1185">Reference proteome</keyword>
<keyword id="KW-0808">Transferase</keyword>
<protein>
    <recommendedName>
        <fullName evidence="1">Aspartate/glutamate leucyltransferase</fullName>
        <ecNumber evidence="1">2.3.2.29</ecNumber>
    </recommendedName>
</protein>
<comment type="function">
    <text evidence="1">Functions in the N-end rule pathway of protein degradation where it conjugates Leu from its aminoacyl-tRNA to the N-termini of proteins containing an N-terminal aspartate or glutamate.</text>
</comment>
<comment type="catalytic activity">
    <reaction evidence="1">
        <text>N-terminal L-glutamyl-[protein] + L-leucyl-tRNA(Leu) = N-terminal L-leucyl-L-glutamyl-[protein] + tRNA(Leu) + H(+)</text>
        <dbReference type="Rhea" id="RHEA:50412"/>
        <dbReference type="Rhea" id="RHEA-COMP:9613"/>
        <dbReference type="Rhea" id="RHEA-COMP:9622"/>
        <dbReference type="Rhea" id="RHEA-COMP:12664"/>
        <dbReference type="Rhea" id="RHEA-COMP:12668"/>
        <dbReference type="ChEBI" id="CHEBI:15378"/>
        <dbReference type="ChEBI" id="CHEBI:64721"/>
        <dbReference type="ChEBI" id="CHEBI:78442"/>
        <dbReference type="ChEBI" id="CHEBI:78494"/>
        <dbReference type="ChEBI" id="CHEBI:133041"/>
        <dbReference type="EC" id="2.3.2.29"/>
    </reaction>
</comment>
<comment type="catalytic activity">
    <reaction evidence="1">
        <text>N-terminal L-aspartyl-[protein] + L-leucyl-tRNA(Leu) = N-terminal L-leucyl-L-aspartyl-[protein] + tRNA(Leu) + H(+)</text>
        <dbReference type="Rhea" id="RHEA:50420"/>
        <dbReference type="Rhea" id="RHEA-COMP:9613"/>
        <dbReference type="Rhea" id="RHEA-COMP:9622"/>
        <dbReference type="Rhea" id="RHEA-COMP:12669"/>
        <dbReference type="Rhea" id="RHEA-COMP:12674"/>
        <dbReference type="ChEBI" id="CHEBI:15378"/>
        <dbReference type="ChEBI" id="CHEBI:64720"/>
        <dbReference type="ChEBI" id="CHEBI:78442"/>
        <dbReference type="ChEBI" id="CHEBI:78494"/>
        <dbReference type="ChEBI" id="CHEBI:133042"/>
        <dbReference type="EC" id="2.3.2.29"/>
    </reaction>
</comment>
<comment type="subcellular location">
    <subcellularLocation>
        <location evidence="1">Cytoplasm</location>
    </subcellularLocation>
</comment>
<comment type="similarity">
    <text evidence="1">Belongs to the R-transferase family. Bpt subfamily.</text>
</comment>
<organism>
    <name type="scientific">Phenylobacterium zucineum (strain HLK1)</name>
    <dbReference type="NCBI Taxonomy" id="450851"/>
    <lineage>
        <taxon>Bacteria</taxon>
        <taxon>Pseudomonadati</taxon>
        <taxon>Pseudomonadota</taxon>
        <taxon>Alphaproteobacteria</taxon>
        <taxon>Caulobacterales</taxon>
        <taxon>Caulobacteraceae</taxon>
        <taxon>Phenylobacterium</taxon>
    </lineage>
</organism>
<evidence type="ECO:0000255" key="1">
    <source>
        <dbReference type="HAMAP-Rule" id="MF_00689"/>
    </source>
</evidence>
<gene>
    <name evidence="1" type="primary">bpt</name>
    <name type="ordered locus">PHZ_c1688</name>
</gene>